<gene>
    <name type="primary">EMX2</name>
</gene>
<dbReference type="EMBL" id="AF301598">
    <property type="protein sequence ID" value="AAK95496.1"/>
    <property type="molecule type" value="mRNA"/>
</dbReference>
<dbReference type="EMBL" id="AL161811">
    <property type="protein sequence ID" value="CAB82104.1"/>
    <property type="molecule type" value="mRNA"/>
</dbReference>
<dbReference type="EMBL" id="AK055041">
    <property type="protein sequence ID" value="BAB70842.1"/>
    <property type="molecule type" value="mRNA"/>
</dbReference>
<dbReference type="EMBL" id="AC005871">
    <property type="status" value="NOT_ANNOTATED_CDS"/>
    <property type="molecule type" value="Genomic_DNA"/>
</dbReference>
<dbReference type="EMBL" id="X68880">
    <property type="protein sequence ID" value="CAA48751.1"/>
    <property type="molecule type" value="mRNA"/>
</dbReference>
<dbReference type="CCDS" id="CCDS53583.1">
    <molecule id="Q04743-2"/>
</dbReference>
<dbReference type="CCDS" id="CCDS7601.1">
    <molecule id="Q04743-1"/>
</dbReference>
<dbReference type="PIR" id="S22722">
    <property type="entry name" value="S22722"/>
</dbReference>
<dbReference type="RefSeq" id="NP_001159396.1">
    <molecule id="Q04743-2"/>
    <property type="nucleotide sequence ID" value="NM_001165924.2"/>
</dbReference>
<dbReference type="RefSeq" id="NP_004089.1">
    <molecule id="Q04743-1"/>
    <property type="nucleotide sequence ID" value="NM_004098.4"/>
</dbReference>
<dbReference type="SMR" id="Q04743"/>
<dbReference type="BioGRID" id="108333">
    <property type="interactions" value="34"/>
</dbReference>
<dbReference type="FunCoup" id="Q04743">
    <property type="interactions" value="493"/>
</dbReference>
<dbReference type="IntAct" id="Q04743">
    <property type="interactions" value="34"/>
</dbReference>
<dbReference type="STRING" id="9606.ENSP00000450962"/>
<dbReference type="GlyGen" id="Q04743">
    <property type="glycosylation" value="1 site, 1 O-linked glycan (1 site)"/>
</dbReference>
<dbReference type="iPTMnet" id="Q04743"/>
<dbReference type="PhosphoSitePlus" id="Q04743"/>
<dbReference type="BioMuta" id="EMX2"/>
<dbReference type="DMDM" id="19862512"/>
<dbReference type="MassIVE" id="Q04743"/>
<dbReference type="PaxDb" id="9606-ENSP00000450962"/>
<dbReference type="PeptideAtlas" id="Q04743"/>
<dbReference type="ProteomicsDB" id="32794"/>
<dbReference type="ProteomicsDB" id="58277">
    <molecule id="Q04743-1"/>
</dbReference>
<dbReference type="Antibodypedia" id="18764">
    <property type="antibodies" value="339 antibodies from 32 providers"/>
</dbReference>
<dbReference type="DNASU" id="2018"/>
<dbReference type="Ensembl" id="ENST00000442245.5">
    <molecule id="Q04743-2"/>
    <property type="protein sequence ID" value="ENSP00000474874.1"/>
    <property type="gene ID" value="ENSG00000170370.12"/>
</dbReference>
<dbReference type="Ensembl" id="ENST00000553456.5">
    <molecule id="Q04743-1"/>
    <property type="protein sequence ID" value="ENSP00000450962.3"/>
    <property type="gene ID" value="ENSG00000170370.12"/>
</dbReference>
<dbReference type="GeneID" id="2018"/>
<dbReference type="KEGG" id="hsa:2018"/>
<dbReference type="MANE-Select" id="ENST00000553456.5">
    <property type="protein sequence ID" value="ENSP00000450962.3"/>
    <property type="RefSeq nucleotide sequence ID" value="NM_004098.4"/>
    <property type="RefSeq protein sequence ID" value="NP_004089.1"/>
</dbReference>
<dbReference type="UCSC" id="uc001ldh.5">
    <molecule id="Q04743-1"/>
    <property type="organism name" value="human"/>
</dbReference>
<dbReference type="AGR" id="HGNC:3341"/>
<dbReference type="CTD" id="2018"/>
<dbReference type="DisGeNET" id="2018"/>
<dbReference type="GeneCards" id="EMX2"/>
<dbReference type="HGNC" id="HGNC:3341">
    <property type="gene designation" value="EMX2"/>
</dbReference>
<dbReference type="HPA" id="ENSG00000170370">
    <property type="expression patterns" value="Tissue enhanced (endometrium, epididymis)"/>
</dbReference>
<dbReference type="MalaCards" id="EMX2"/>
<dbReference type="MIM" id="269160">
    <property type="type" value="phenotype"/>
</dbReference>
<dbReference type="MIM" id="600035">
    <property type="type" value="gene"/>
</dbReference>
<dbReference type="neXtProt" id="NX_Q04743"/>
<dbReference type="OpenTargets" id="ENSG00000170370"/>
<dbReference type="Orphanet" id="485275">
    <property type="disease" value="Acquired schizencephaly"/>
</dbReference>
<dbReference type="PharmGKB" id="PA27778"/>
<dbReference type="VEuPathDB" id="HostDB:ENSG00000170370"/>
<dbReference type="eggNOG" id="KOG0843">
    <property type="taxonomic scope" value="Eukaryota"/>
</dbReference>
<dbReference type="GeneTree" id="ENSGT00940000157425"/>
<dbReference type="HOGENOM" id="CLU_049668_1_0_1"/>
<dbReference type="InParanoid" id="Q04743"/>
<dbReference type="OMA" id="RWRMETQ"/>
<dbReference type="OrthoDB" id="6159439at2759"/>
<dbReference type="PAN-GO" id="Q04743">
    <property type="GO annotations" value="7 GO annotations based on evolutionary models"/>
</dbReference>
<dbReference type="PhylomeDB" id="Q04743"/>
<dbReference type="TreeFam" id="TF317015"/>
<dbReference type="PathwayCommons" id="Q04743"/>
<dbReference type="Reactome" id="R-HSA-9830364">
    <property type="pathway name" value="Formation of the nephric duct"/>
</dbReference>
<dbReference type="SignaLink" id="Q04743"/>
<dbReference type="SIGNOR" id="Q04743"/>
<dbReference type="BioGRID-ORCS" id="2018">
    <property type="hits" value="14 hits in 1164 CRISPR screens"/>
</dbReference>
<dbReference type="ChiTaRS" id="EMX2">
    <property type="organism name" value="human"/>
</dbReference>
<dbReference type="GeneWiki" id="EMX2"/>
<dbReference type="GenomeRNAi" id="2018"/>
<dbReference type="Pharos" id="Q04743">
    <property type="development level" value="Tbio"/>
</dbReference>
<dbReference type="PRO" id="PR:Q04743"/>
<dbReference type="Proteomes" id="UP000005640">
    <property type="component" value="Chromosome 10"/>
</dbReference>
<dbReference type="RNAct" id="Q04743">
    <property type="molecule type" value="protein"/>
</dbReference>
<dbReference type="Bgee" id="ENSG00000170370">
    <property type="expression patterns" value="Expressed in corpus epididymis and 142 other cell types or tissues"/>
</dbReference>
<dbReference type="ExpressionAtlas" id="Q04743">
    <property type="expression patterns" value="baseline and differential"/>
</dbReference>
<dbReference type="GO" id="GO:0030424">
    <property type="term" value="C:axon"/>
    <property type="evidence" value="ECO:0007669"/>
    <property type="project" value="UniProtKB-SubCell"/>
</dbReference>
<dbReference type="GO" id="GO:0000785">
    <property type="term" value="C:chromatin"/>
    <property type="evidence" value="ECO:0000247"/>
    <property type="project" value="NTNU_SB"/>
</dbReference>
<dbReference type="GO" id="GO:0005634">
    <property type="term" value="C:nucleus"/>
    <property type="evidence" value="ECO:0000318"/>
    <property type="project" value="GO_Central"/>
</dbReference>
<dbReference type="GO" id="GO:0000981">
    <property type="term" value="F:DNA-binding transcription factor activity, RNA polymerase II-specific"/>
    <property type="evidence" value="ECO:0000247"/>
    <property type="project" value="NTNU_SB"/>
</dbReference>
<dbReference type="GO" id="GO:0000978">
    <property type="term" value="F:RNA polymerase II cis-regulatory region sequence-specific DNA binding"/>
    <property type="evidence" value="ECO:0000318"/>
    <property type="project" value="GO_Central"/>
</dbReference>
<dbReference type="GO" id="GO:1990837">
    <property type="term" value="F:sequence-specific double-stranded DNA binding"/>
    <property type="evidence" value="ECO:0000314"/>
    <property type="project" value="ARUK-UCL"/>
</dbReference>
<dbReference type="GO" id="GO:0009952">
    <property type="term" value="P:anterior/posterior pattern specification"/>
    <property type="evidence" value="ECO:0007669"/>
    <property type="project" value="Ensembl"/>
</dbReference>
<dbReference type="GO" id="GO:0007420">
    <property type="term" value="P:brain development"/>
    <property type="evidence" value="ECO:0000318"/>
    <property type="project" value="GO_Central"/>
</dbReference>
<dbReference type="GO" id="GO:0021846">
    <property type="term" value="P:cell proliferation in forebrain"/>
    <property type="evidence" value="ECO:0007669"/>
    <property type="project" value="Ensembl"/>
</dbReference>
<dbReference type="GO" id="GO:0007417">
    <property type="term" value="P:central nervous system development"/>
    <property type="evidence" value="ECO:0000318"/>
    <property type="project" value="GO_Central"/>
</dbReference>
<dbReference type="GO" id="GO:0021796">
    <property type="term" value="P:cerebral cortex regionalization"/>
    <property type="evidence" value="ECO:0007669"/>
    <property type="project" value="Ensembl"/>
</dbReference>
<dbReference type="GO" id="GO:0021542">
    <property type="term" value="P:dentate gyrus development"/>
    <property type="evidence" value="ECO:0007669"/>
    <property type="project" value="Ensembl"/>
</dbReference>
<dbReference type="GO" id="GO:0021885">
    <property type="term" value="P:forebrain cell migration"/>
    <property type="evidence" value="ECO:0007669"/>
    <property type="project" value="Ensembl"/>
</dbReference>
<dbReference type="GO" id="GO:0030182">
    <property type="term" value="P:neuron differentiation"/>
    <property type="evidence" value="ECO:0000318"/>
    <property type="project" value="GO_Central"/>
</dbReference>
<dbReference type="GO" id="GO:0001764">
    <property type="term" value="P:neuron migration"/>
    <property type="evidence" value="ECO:0007669"/>
    <property type="project" value="Ensembl"/>
</dbReference>
<dbReference type="GO" id="GO:0006357">
    <property type="term" value="P:regulation of transcription by RNA polymerase II"/>
    <property type="evidence" value="ECO:0000318"/>
    <property type="project" value="GO_Central"/>
</dbReference>
<dbReference type="GO" id="GO:0009410">
    <property type="term" value="P:response to xenobiotic stimulus"/>
    <property type="evidence" value="ECO:0007669"/>
    <property type="project" value="Ensembl"/>
</dbReference>
<dbReference type="GO" id="GO:0160194">
    <property type="term" value="P:stereocilium bundle organization"/>
    <property type="evidence" value="ECO:0000250"/>
    <property type="project" value="UniProtKB"/>
</dbReference>
<dbReference type="GO" id="GO:0072197">
    <property type="term" value="P:ureter morphogenesis"/>
    <property type="evidence" value="ECO:0007669"/>
    <property type="project" value="Ensembl"/>
</dbReference>
<dbReference type="CDD" id="cd00086">
    <property type="entry name" value="homeodomain"/>
    <property type="match status" value="1"/>
</dbReference>
<dbReference type="FunFam" id="1.10.10.60:FF:000299">
    <property type="entry name" value="Empty spiracles homeobox 3"/>
    <property type="match status" value="1"/>
</dbReference>
<dbReference type="Gene3D" id="1.10.10.60">
    <property type="entry name" value="Homeodomain-like"/>
    <property type="match status" value="1"/>
</dbReference>
<dbReference type="InterPro" id="IPR050877">
    <property type="entry name" value="EMX-VAX-Noto_Homeobox_TFs"/>
</dbReference>
<dbReference type="InterPro" id="IPR001356">
    <property type="entry name" value="HD"/>
</dbReference>
<dbReference type="InterPro" id="IPR020479">
    <property type="entry name" value="HD_metazoa"/>
</dbReference>
<dbReference type="InterPro" id="IPR017970">
    <property type="entry name" value="Homeobox_CS"/>
</dbReference>
<dbReference type="InterPro" id="IPR009057">
    <property type="entry name" value="Homeodomain-like_sf"/>
</dbReference>
<dbReference type="InterPro" id="IPR000047">
    <property type="entry name" value="HTH_motif"/>
</dbReference>
<dbReference type="PANTHER" id="PTHR24339">
    <property type="entry name" value="HOMEOBOX PROTEIN EMX-RELATED"/>
    <property type="match status" value="1"/>
</dbReference>
<dbReference type="PANTHER" id="PTHR24339:SF25">
    <property type="entry name" value="HOMEOBOX PROTEIN EMX2"/>
    <property type="match status" value="1"/>
</dbReference>
<dbReference type="Pfam" id="PF00046">
    <property type="entry name" value="Homeodomain"/>
    <property type="match status" value="1"/>
</dbReference>
<dbReference type="PRINTS" id="PR00024">
    <property type="entry name" value="HOMEOBOX"/>
</dbReference>
<dbReference type="PRINTS" id="PR00031">
    <property type="entry name" value="HTHREPRESSR"/>
</dbReference>
<dbReference type="SMART" id="SM00389">
    <property type="entry name" value="HOX"/>
    <property type="match status" value="1"/>
</dbReference>
<dbReference type="SUPFAM" id="SSF46689">
    <property type="entry name" value="Homeodomain-like"/>
    <property type="match status" value="1"/>
</dbReference>
<dbReference type="PROSITE" id="PS00027">
    <property type="entry name" value="HOMEOBOX_1"/>
    <property type="match status" value="1"/>
</dbReference>
<dbReference type="PROSITE" id="PS50071">
    <property type="entry name" value="HOMEOBOX_2"/>
    <property type="match status" value="1"/>
</dbReference>
<feature type="chain" id="PRO_0000048868" description="Homeobox protein EMX2">
    <location>
        <begin position="1"/>
        <end position="252"/>
    </location>
</feature>
<feature type="DNA-binding region" description="Homeobox" evidence="2">
    <location>
        <begin position="154"/>
        <end position="213"/>
    </location>
</feature>
<feature type="region of interest" description="Disordered" evidence="3">
    <location>
        <begin position="212"/>
        <end position="252"/>
    </location>
</feature>
<feature type="compositionally biased region" description="Basic residues" evidence="3">
    <location>
        <begin position="224"/>
        <end position="233"/>
    </location>
</feature>
<feature type="splice variant" id="VSP_045823" description="In isoform 2." evidence="5">
    <original>NDTSPESFLLHNALARKPKRIRTAFSPSQLLRLEHAFEKNHYVVGAERKQLAHSLSLTETQVKVWFQNRRTKFKRQKLEEEGSDSQQKKKGTHHINRWRIATKQASPEEIDVTSDD</original>
    <variation>KSMVSEPKNKVQKAEAGGRRLRFATKEKRDAPY</variation>
    <location>
        <begin position="137"/>
        <end position="252"/>
    </location>
</feature>
<feature type="sequence conflict" description="In Ref. 3; BAB70842." evidence="5" ref="3">
    <original>S</original>
    <variation>P</variation>
    <location>
        <position position="104"/>
    </location>
</feature>
<reference key="1">
    <citation type="journal article" date="2001" name="Genomics">
        <title>Characterization of the homeodomain gene EMX2: sequence conservation, expression analysis and a search for mutations in endometrial cancers.</title>
        <authorList>
            <person name="Noonan F.C."/>
            <person name="Mutch D.G."/>
            <person name="Mallon M."/>
            <person name="Goodfellow P.J."/>
        </authorList>
    </citation>
    <scope>NUCLEOTIDE SEQUENCE [MRNA] (ISOFORM 1)</scope>
</reference>
<reference key="2">
    <citation type="journal article" date="2001" name="Genome Res.">
        <title>Towards a catalog of human genes and proteins: sequencing and analysis of 500 novel complete protein coding human cDNAs.</title>
        <authorList>
            <person name="Wiemann S."/>
            <person name="Weil B."/>
            <person name="Wellenreuther R."/>
            <person name="Gassenhuber J."/>
            <person name="Glassl S."/>
            <person name="Ansorge W."/>
            <person name="Boecher M."/>
            <person name="Bloecker H."/>
            <person name="Bauersachs S."/>
            <person name="Blum H."/>
            <person name="Lauber J."/>
            <person name="Duesterhoeft A."/>
            <person name="Beyer A."/>
            <person name="Koehrer K."/>
            <person name="Strack N."/>
            <person name="Mewes H.-W."/>
            <person name="Ottenwaelder B."/>
            <person name="Obermaier B."/>
            <person name="Tampe J."/>
            <person name="Heubner D."/>
            <person name="Wambutt R."/>
            <person name="Korn B."/>
            <person name="Klein M."/>
            <person name="Poustka A."/>
        </authorList>
    </citation>
    <scope>NUCLEOTIDE SEQUENCE [LARGE SCALE MRNA] (ISOFORM 1)</scope>
    <source>
        <tissue>Amygdala</tissue>
    </source>
</reference>
<reference key="3">
    <citation type="journal article" date="2004" name="Nat. Genet.">
        <title>Complete sequencing and characterization of 21,243 full-length human cDNAs.</title>
        <authorList>
            <person name="Ota T."/>
            <person name="Suzuki Y."/>
            <person name="Nishikawa T."/>
            <person name="Otsuki T."/>
            <person name="Sugiyama T."/>
            <person name="Irie R."/>
            <person name="Wakamatsu A."/>
            <person name="Hayashi K."/>
            <person name="Sato H."/>
            <person name="Nagai K."/>
            <person name="Kimura K."/>
            <person name="Makita H."/>
            <person name="Sekine M."/>
            <person name="Obayashi M."/>
            <person name="Nishi T."/>
            <person name="Shibahara T."/>
            <person name="Tanaka T."/>
            <person name="Ishii S."/>
            <person name="Yamamoto J."/>
            <person name="Saito K."/>
            <person name="Kawai Y."/>
            <person name="Isono Y."/>
            <person name="Nakamura Y."/>
            <person name="Nagahari K."/>
            <person name="Murakami K."/>
            <person name="Yasuda T."/>
            <person name="Iwayanagi T."/>
            <person name="Wagatsuma M."/>
            <person name="Shiratori A."/>
            <person name="Sudo H."/>
            <person name="Hosoiri T."/>
            <person name="Kaku Y."/>
            <person name="Kodaira H."/>
            <person name="Kondo H."/>
            <person name="Sugawara M."/>
            <person name="Takahashi M."/>
            <person name="Kanda K."/>
            <person name="Yokoi T."/>
            <person name="Furuya T."/>
            <person name="Kikkawa E."/>
            <person name="Omura Y."/>
            <person name="Abe K."/>
            <person name="Kamihara K."/>
            <person name="Katsuta N."/>
            <person name="Sato K."/>
            <person name="Tanikawa M."/>
            <person name="Yamazaki M."/>
            <person name="Ninomiya K."/>
            <person name="Ishibashi T."/>
            <person name="Yamashita H."/>
            <person name="Murakawa K."/>
            <person name="Fujimori K."/>
            <person name="Tanai H."/>
            <person name="Kimata M."/>
            <person name="Watanabe M."/>
            <person name="Hiraoka S."/>
            <person name="Chiba Y."/>
            <person name="Ishida S."/>
            <person name="Ono Y."/>
            <person name="Takiguchi S."/>
            <person name="Watanabe S."/>
            <person name="Yosida M."/>
            <person name="Hotuta T."/>
            <person name="Kusano J."/>
            <person name="Kanehori K."/>
            <person name="Takahashi-Fujii A."/>
            <person name="Hara H."/>
            <person name="Tanase T.-O."/>
            <person name="Nomura Y."/>
            <person name="Togiya S."/>
            <person name="Komai F."/>
            <person name="Hara R."/>
            <person name="Takeuchi K."/>
            <person name="Arita M."/>
            <person name="Imose N."/>
            <person name="Musashino K."/>
            <person name="Yuuki H."/>
            <person name="Oshima A."/>
            <person name="Sasaki N."/>
            <person name="Aotsuka S."/>
            <person name="Yoshikawa Y."/>
            <person name="Matsunawa H."/>
            <person name="Ichihara T."/>
            <person name="Shiohata N."/>
            <person name="Sano S."/>
            <person name="Moriya S."/>
            <person name="Momiyama H."/>
            <person name="Satoh N."/>
            <person name="Takami S."/>
            <person name="Terashima Y."/>
            <person name="Suzuki O."/>
            <person name="Nakagawa S."/>
            <person name="Senoh A."/>
            <person name="Mizoguchi H."/>
            <person name="Goto Y."/>
            <person name="Shimizu F."/>
            <person name="Wakebe H."/>
            <person name="Hishigaki H."/>
            <person name="Watanabe T."/>
            <person name="Sugiyama A."/>
            <person name="Takemoto M."/>
            <person name="Kawakami B."/>
            <person name="Yamazaki M."/>
            <person name="Watanabe K."/>
            <person name="Kumagai A."/>
            <person name="Itakura S."/>
            <person name="Fukuzumi Y."/>
            <person name="Fujimori Y."/>
            <person name="Komiyama M."/>
            <person name="Tashiro H."/>
            <person name="Tanigami A."/>
            <person name="Fujiwara T."/>
            <person name="Ono T."/>
            <person name="Yamada K."/>
            <person name="Fujii Y."/>
            <person name="Ozaki K."/>
            <person name="Hirao M."/>
            <person name="Ohmori Y."/>
            <person name="Kawabata A."/>
            <person name="Hikiji T."/>
            <person name="Kobatake N."/>
            <person name="Inagaki H."/>
            <person name="Ikema Y."/>
            <person name="Okamoto S."/>
            <person name="Okitani R."/>
            <person name="Kawakami T."/>
            <person name="Noguchi S."/>
            <person name="Itoh T."/>
            <person name="Shigeta K."/>
            <person name="Senba T."/>
            <person name="Matsumura K."/>
            <person name="Nakajima Y."/>
            <person name="Mizuno T."/>
            <person name="Morinaga M."/>
            <person name="Sasaki M."/>
            <person name="Togashi T."/>
            <person name="Oyama M."/>
            <person name="Hata H."/>
            <person name="Watanabe M."/>
            <person name="Komatsu T."/>
            <person name="Mizushima-Sugano J."/>
            <person name="Satoh T."/>
            <person name="Shirai Y."/>
            <person name="Takahashi Y."/>
            <person name="Nakagawa K."/>
            <person name="Okumura K."/>
            <person name="Nagase T."/>
            <person name="Nomura N."/>
            <person name="Kikuchi H."/>
            <person name="Masuho Y."/>
            <person name="Yamashita R."/>
            <person name="Nakai K."/>
            <person name="Yada T."/>
            <person name="Nakamura Y."/>
            <person name="Ohara O."/>
            <person name="Isogai T."/>
            <person name="Sugano S."/>
        </authorList>
    </citation>
    <scope>NUCLEOTIDE SEQUENCE [LARGE SCALE MRNA] (ISOFORM 1)</scope>
    <source>
        <tissue>Brain</tissue>
    </source>
</reference>
<reference key="4">
    <citation type="journal article" date="2004" name="Nature">
        <title>The DNA sequence and comparative analysis of human chromosome 10.</title>
        <authorList>
            <person name="Deloukas P."/>
            <person name="Earthrowl M.E."/>
            <person name="Grafham D.V."/>
            <person name="Rubenfield M."/>
            <person name="French L."/>
            <person name="Steward C.A."/>
            <person name="Sims S.K."/>
            <person name="Jones M.C."/>
            <person name="Searle S."/>
            <person name="Scott C."/>
            <person name="Howe K."/>
            <person name="Hunt S.E."/>
            <person name="Andrews T.D."/>
            <person name="Gilbert J.G.R."/>
            <person name="Swarbreck D."/>
            <person name="Ashurst J.L."/>
            <person name="Taylor A."/>
            <person name="Battles J."/>
            <person name="Bird C.P."/>
            <person name="Ainscough R."/>
            <person name="Almeida J.P."/>
            <person name="Ashwell R.I.S."/>
            <person name="Ambrose K.D."/>
            <person name="Babbage A.K."/>
            <person name="Bagguley C.L."/>
            <person name="Bailey J."/>
            <person name="Banerjee R."/>
            <person name="Bates K."/>
            <person name="Beasley H."/>
            <person name="Bray-Allen S."/>
            <person name="Brown A.J."/>
            <person name="Brown J.Y."/>
            <person name="Burford D.C."/>
            <person name="Burrill W."/>
            <person name="Burton J."/>
            <person name="Cahill P."/>
            <person name="Camire D."/>
            <person name="Carter N.P."/>
            <person name="Chapman J.C."/>
            <person name="Clark S.Y."/>
            <person name="Clarke G."/>
            <person name="Clee C.M."/>
            <person name="Clegg S."/>
            <person name="Corby N."/>
            <person name="Coulson A."/>
            <person name="Dhami P."/>
            <person name="Dutta I."/>
            <person name="Dunn M."/>
            <person name="Faulkner L."/>
            <person name="Frankish A."/>
            <person name="Frankland J.A."/>
            <person name="Garner P."/>
            <person name="Garnett J."/>
            <person name="Gribble S."/>
            <person name="Griffiths C."/>
            <person name="Grocock R."/>
            <person name="Gustafson E."/>
            <person name="Hammond S."/>
            <person name="Harley J.L."/>
            <person name="Hart E."/>
            <person name="Heath P.D."/>
            <person name="Ho T.P."/>
            <person name="Hopkins B."/>
            <person name="Horne J."/>
            <person name="Howden P.J."/>
            <person name="Huckle E."/>
            <person name="Hynds C."/>
            <person name="Johnson C."/>
            <person name="Johnson D."/>
            <person name="Kana A."/>
            <person name="Kay M."/>
            <person name="Kimberley A.M."/>
            <person name="Kershaw J.K."/>
            <person name="Kokkinaki M."/>
            <person name="Laird G.K."/>
            <person name="Lawlor S."/>
            <person name="Lee H.M."/>
            <person name="Leongamornlert D.A."/>
            <person name="Laird G."/>
            <person name="Lloyd C."/>
            <person name="Lloyd D.M."/>
            <person name="Loveland J."/>
            <person name="Lovell J."/>
            <person name="McLaren S."/>
            <person name="McLay K.E."/>
            <person name="McMurray A."/>
            <person name="Mashreghi-Mohammadi M."/>
            <person name="Matthews L."/>
            <person name="Milne S."/>
            <person name="Nickerson T."/>
            <person name="Nguyen M."/>
            <person name="Overton-Larty E."/>
            <person name="Palmer S.A."/>
            <person name="Pearce A.V."/>
            <person name="Peck A.I."/>
            <person name="Pelan S."/>
            <person name="Phillimore B."/>
            <person name="Porter K."/>
            <person name="Rice C.M."/>
            <person name="Rogosin A."/>
            <person name="Ross M.T."/>
            <person name="Sarafidou T."/>
            <person name="Sehra H.K."/>
            <person name="Shownkeen R."/>
            <person name="Skuce C.D."/>
            <person name="Smith M."/>
            <person name="Standring L."/>
            <person name="Sycamore N."/>
            <person name="Tester J."/>
            <person name="Thorpe A."/>
            <person name="Torcasso W."/>
            <person name="Tracey A."/>
            <person name="Tromans A."/>
            <person name="Tsolas J."/>
            <person name="Wall M."/>
            <person name="Walsh J."/>
            <person name="Wang H."/>
            <person name="Weinstock K."/>
            <person name="West A.P."/>
            <person name="Willey D.L."/>
            <person name="Whitehead S.L."/>
            <person name="Wilming L."/>
            <person name="Wray P.W."/>
            <person name="Young L."/>
            <person name="Chen Y."/>
            <person name="Lovering R.C."/>
            <person name="Moschonas N.K."/>
            <person name="Siebert R."/>
            <person name="Fechtel K."/>
            <person name="Bentley D."/>
            <person name="Durbin R.M."/>
            <person name="Hubbard T."/>
            <person name="Doucette-Stamm L."/>
            <person name="Beck S."/>
            <person name="Smith D.R."/>
            <person name="Rogers J."/>
        </authorList>
    </citation>
    <scope>NUCLEOTIDE SEQUENCE [LARGE SCALE GENOMIC DNA]</scope>
</reference>
<reference key="5">
    <citation type="journal article" date="1992" name="EMBO J.">
        <title>Two vertebrate homeobox genes related to the Drosophila empty spiracles gene are expressed in the embryonic cerebral cortex.</title>
        <authorList>
            <person name="Simeone A."/>
            <person name="Gulisano M."/>
            <person name="Acampora D."/>
            <person name="Stornaiuolo A."/>
            <person name="Rambaldi M."/>
            <person name="Boncinelli E."/>
        </authorList>
    </citation>
    <scope>NUCLEOTIDE SEQUENCE [MRNA] OF 95-252 (ISOFORM 1)</scope>
</reference>
<reference key="6">
    <citation type="journal article" date="1996" name="Nat. Genet.">
        <title>Germline mutations in the homeobox gene EMX2 in patients with severe schizencephaly.</title>
        <authorList>
            <person name="Brunelli S."/>
            <person name="Faiella A."/>
            <person name="Capra V."/>
            <person name="Nigro V."/>
            <person name="Simeone A."/>
            <person name="Cama A."/>
            <person name="Boncinelli E."/>
        </authorList>
    </citation>
    <scope>INVOLVEMENT IN SCHZC</scope>
</reference>
<name>EMX2_HUMAN</name>
<protein>
    <recommendedName>
        <fullName>Homeobox protein EMX2</fullName>
    </recommendedName>
    <alternativeName>
        <fullName>Empty spiracles homolog 2</fullName>
    </alternativeName>
    <alternativeName>
        <fullName>Empty spiracles-like protein 2</fullName>
    </alternativeName>
</protein>
<evidence type="ECO:0000250" key="1">
    <source>
        <dbReference type="UniProtKB" id="Q04744"/>
    </source>
</evidence>
<evidence type="ECO:0000255" key="2">
    <source>
        <dbReference type="PROSITE-ProRule" id="PRU00108"/>
    </source>
</evidence>
<evidence type="ECO:0000256" key="3">
    <source>
        <dbReference type="SAM" id="MobiDB-lite"/>
    </source>
</evidence>
<evidence type="ECO:0000269" key="4">
    <source>
    </source>
</evidence>
<evidence type="ECO:0000305" key="5"/>
<proteinExistence type="evidence at protein level"/>
<sequence>MFQPAPKRCFTIESLVAKDSPLPASRSEDPIRPAALSYANSSPINPFLNGFHSAAAAAAGRGVYSNPDLVFAEAVSHPPNPAVPVHPVPPPHALAAHPLPSSHSPHPLFASQQRDPSTFYPWLIHRYRYLGHRFQGNDTSPESFLLHNALARKPKRIRTAFSPSQLLRLEHAFEKNHYVVGAERKQLAHSLSLTETQVKVWFQNRRTKFKRQKLEEEGSDSQQKKKGTHHINRWRIATKQASPEEIDVTSDD</sequence>
<accession>Q04743</accession>
<accession>G3V305</accession>
<accession>Q96NN8</accession>
<accession>Q9BQF4</accession>
<comment type="function">
    <text evidence="1">Transcription factor, which in cooperation with EMX1, acts to generate the boundary between the roof and archipallium in the developing brain. May function in combination with OTX1/2 to specify cell fates in the developing central nervous system. In the inner ear, it controls the distribution of GPR156 at hair cell boundaries, and regulates the organization of stereociliary bundles in opposite orientations across the line of polarity reversal (LPR).</text>
</comment>
<comment type="subunit">
    <text evidence="1">Interacts with translation initiation factor EIF4E.</text>
</comment>
<comment type="interaction">
    <interactant intactId="EBI-399831">
        <id>Q04743</id>
    </interactant>
    <interactant intactId="EBI-73440">
        <id>P06730</id>
        <label>EIF4E</label>
    </interactant>
    <organismsDiffer>false</organismsDiffer>
    <experiments>4</experiments>
</comment>
<comment type="interaction">
    <interactant intactId="EBI-399831">
        <id>Q04743</id>
    </interactant>
    <interactant intactId="EBI-11960139">
        <id>Q7L8S5</id>
        <label>OTUD6A</label>
    </interactant>
    <organismsDiffer>false</organismsDiffer>
    <experiments>3</experiments>
</comment>
<comment type="subcellular location">
    <subcellularLocation>
        <location evidence="1">Nucleus</location>
    </subcellularLocation>
    <subcellularLocation>
        <location evidence="1">Cell projection</location>
        <location evidence="1">Axon</location>
    </subcellularLocation>
    <text evidence="1">Detected in axons within the olfactory mucosa and glomeruli in the olfactory bulb.</text>
</comment>
<comment type="alternative products">
    <event type="alternative splicing"/>
    <isoform>
        <id>Q04743-1</id>
        <name>1</name>
        <sequence type="displayed"/>
    </isoform>
    <isoform>
        <id>Q04743-2</id>
        <name>2</name>
        <sequence type="described" ref="VSP_045823"/>
    </isoform>
</comment>
<comment type="tissue specificity">
    <text>Cerebral cortex.</text>
</comment>
<comment type="disease" evidence="4">
    <disease id="DI-02284">
        <name>Schizencephaly</name>
        <acronym>SCHZC</acronym>
        <description>Extremely rare human congenital disorder characterized by a full-thickness cleft within the cerebral hemispheres. These clefts are lined with gray matter and most commonly involve the parasylvian regions. Large portions of the cerebral hemispheres may be absent and replaced by cerebro-spinal fluid.</description>
        <dbReference type="MIM" id="269160"/>
    </disease>
    <text>The disease is caused by variants affecting the gene represented in this entry.</text>
</comment>
<comment type="similarity">
    <text evidence="5">Belongs to the EMX homeobox family.</text>
</comment>
<keyword id="KW-0025">Alternative splicing</keyword>
<keyword id="KW-0966">Cell projection</keyword>
<keyword id="KW-0217">Developmental protein</keyword>
<keyword id="KW-0238">DNA-binding</keyword>
<keyword id="KW-0371">Homeobox</keyword>
<keyword id="KW-0539">Nucleus</keyword>
<keyword id="KW-1267">Proteomics identification</keyword>
<keyword id="KW-1185">Reference proteome</keyword>
<organism>
    <name type="scientific">Homo sapiens</name>
    <name type="common">Human</name>
    <dbReference type="NCBI Taxonomy" id="9606"/>
    <lineage>
        <taxon>Eukaryota</taxon>
        <taxon>Metazoa</taxon>
        <taxon>Chordata</taxon>
        <taxon>Craniata</taxon>
        <taxon>Vertebrata</taxon>
        <taxon>Euteleostomi</taxon>
        <taxon>Mammalia</taxon>
        <taxon>Eutheria</taxon>
        <taxon>Euarchontoglires</taxon>
        <taxon>Primates</taxon>
        <taxon>Haplorrhini</taxon>
        <taxon>Catarrhini</taxon>
        <taxon>Hominidae</taxon>
        <taxon>Homo</taxon>
    </lineage>
</organism>